<proteinExistence type="inferred from homology"/>
<organism>
    <name type="scientific">Blochmanniella pennsylvanica (strain BPEN)</name>
    <dbReference type="NCBI Taxonomy" id="291272"/>
    <lineage>
        <taxon>Bacteria</taxon>
        <taxon>Pseudomonadati</taxon>
        <taxon>Pseudomonadota</taxon>
        <taxon>Gammaproteobacteria</taxon>
        <taxon>Enterobacterales</taxon>
        <taxon>Enterobacteriaceae</taxon>
        <taxon>ant endosymbionts</taxon>
        <taxon>Candidatus Blochmanniella</taxon>
    </lineage>
</organism>
<evidence type="ECO:0000255" key="1">
    <source>
        <dbReference type="HAMAP-Rule" id="MF_00171"/>
    </source>
</evidence>
<sequence length="261" mass="29944">MQKLALGIEYDGSWYCGWQRQRDAPSIQSYIENAIKKITSESVTVFCAGRTDSGVHALGQVVHFETYSRRSKSAWTLGMNRYLPSSICVRWARLVNKDFHARFSAISRRYCYIINNNCIRSALLFRKTWHYKKYLDINKMCDAAQYLLGENDFSSFRAAGCQSYSARRKLYHIRIIRKGQCIVIDIKANSFMYRMVRNIVGSLVKVGCGEQPEKWIAELLENCNRSLAGVTAPASGLYLVEVKYPSDFSIPSSFIEELWCA</sequence>
<accession>Q492H3</accession>
<protein>
    <recommendedName>
        <fullName evidence="1">tRNA pseudouridine synthase A</fullName>
        <ecNumber evidence="1">5.4.99.12</ecNumber>
    </recommendedName>
    <alternativeName>
        <fullName evidence="1">tRNA pseudouridine(38-40) synthase</fullName>
    </alternativeName>
    <alternativeName>
        <fullName evidence="1">tRNA pseudouridylate synthase I</fullName>
    </alternativeName>
    <alternativeName>
        <fullName evidence="1">tRNA-uridine isomerase I</fullName>
    </alternativeName>
</protein>
<gene>
    <name evidence="1" type="primary">truA</name>
    <name type="ordered locus">BPEN_512</name>
</gene>
<feature type="chain" id="PRO_1000017042" description="tRNA pseudouridine synthase A">
    <location>
        <begin position="1"/>
        <end position="261"/>
    </location>
</feature>
<feature type="active site" description="Nucleophile" evidence="1">
    <location>
        <position position="52"/>
    </location>
</feature>
<feature type="binding site" evidence="1">
    <location>
        <position position="110"/>
    </location>
    <ligand>
        <name>substrate</name>
    </ligand>
</feature>
<comment type="function">
    <text evidence="1">Formation of pseudouridine at positions 38, 39 and 40 in the anticodon stem and loop of transfer RNAs.</text>
</comment>
<comment type="catalytic activity">
    <reaction evidence="1">
        <text>uridine(38/39/40) in tRNA = pseudouridine(38/39/40) in tRNA</text>
        <dbReference type="Rhea" id="RHEA:22376"/>
        <dbReference type="Rhea" id="RHEA-COMP:10085"/>
        <dbReference type="Rhea" id="RHEA-COMP:10087"/>
        <dbReference type="ChEBI" id="CHEBI:65314"/>
        <dbReference type="ChEBI" id="CHEBI:65315"/>
        <dbReference type="EC" id="5.4.99.12"/>
    </reaction>
</comment>
<comment type="subunit">
    <text evidence="1">Homodimer.</text>
</comment>
<comment type="similarity">
    <text evidence="1">Belongs to the tRNA pseudouridine synthase TruA family.</text>
</comment>
<dbReference type="EC" id="5.4.99.12" evidence="1"/>
<dbReference type="EMBL" id="CP000016">
    <property type="protein sequence ID" value="AAZ41126.1"/>
    <property type="molecule type" value="Genomic_DNA"/>
</dbReference>
<dbReference type="RefSeq" id="WP_011283037.1">
    <property type="nucleotide sequence ID" value="NC_007292.1"/>
</dbReference>
<dbReference type="SMR" id="Q492H3"/>
<dbReference type="STRING" id="291272.BPEN_512"/>
<dbReference type="KEGG" id="bpn:BPEN_512"/>
<dbReference type="eggNOG" id="COG0101">
    <property type="taxonomic scope" value="Bacteria"/>
</dbReference>
<dbReference type="HOGENOM" id="CLU_014673_0_2_6"/>
<dbReference type="OrthoDB" id="9811823at2"/>
<dbReference type="Proteomes" id="UP000007794">
    <property type="component" value="Chromosome"/>
</dbReference>
<dbReference type="GO" id="GO:0003723">
    <property type="term" value="F:RNA binding"/>
    <property type="evidence" value="ECO:0007669"/>
    <property type="project" value="InterPro"/>
</dbReference>
<dbReference type="GO" id="GO:0160147">
    <property type="term" value="F:tRNA pseudouridine(38-40) synthase activity"/>
    <property type="evidence" value="ECO:0007669"/>
    <property type="project" value="UniProtKB-EC"/>
</dbReference>
<dbReference type="GO" id="GO:0031119">
    <property type="term" value="P:tRNA pseudouridine synthesis"/>
    <property type="evidence" value="ECO:0007669"/>
    <property type="project" value="UniProtKB-UniRule"/>
</dbReference>
<dbReference type="CDD" id="cd02570">
    <property type="entry name" value="PseudoU_synth_EcTruA"/>
    <property type="match status" value="1"/>
</dbReference>
<dbReference type="FunFam" id="3.30.70.580:FF:000001">
    <property type="entry name" value="tRNA pseudouridine synthase A"/>
    <property type="match status" value="1"/>
</dbReference>
<dbReference type="Gene3D" id="3.30.70.660">
    <property type="entry name" value="Pseudouridine synthase I, catalytic domain, C-terminal subdomain"/>
    <property type="match status" value="1"/>
</dbReference>
<dbReference type="Gene3D" id="3.30.70.580">
    <property type="entry name" value="Pseudouridine synthase I, catalytic domain, N-terminal subdomain"/>
    <property type="match status" value="1"/>
</dbReference>
<dbReference type="HAMAP" id="MF_00171">
    <property type="entry name" value="TruA"/>
    <property type="match status" value="1"/>
</dbReference>
<dbReference type="InterPro" id="IPR020103">
    <property type="entry name" value="PsdUridine_synth_cat_dom_sf"/>
</dbReference>
<dbReference type="InterPro" id="IPR001406">
    <property type="entry name" value="PsdUridine_synth_TruA"/>
</dbReference>
<dbReference type="InterPro" id="IPR020097">
    <property type="entry name" value="PsdUridine_synth_TruA_a/b_dom"/>
</dbReference>
<dbReference type="InterPro" id="IPR020095">
    <property type="entry name" value="PsdUridine_synth_TruA_C"/>
</dbReference>
<dbReference type="InterPro" id="IPR020094">
    <property type="entry name" value="TruA/RsuA/RluB/E/F_N"/>
</dbReference>
<dbReference type="NCBIfam" id="TIGR00071">
    <property type="entry name" value="hisT_truA"/>
    <property type="match status" value="1"/>
</dbReference>
<dbReference type="PANTHER" id="PTHR11142">
    <property type="entry name" value="PSEUDOURIDYLATE SYNTHASE"/>
    <property type="match status" value="1"/>
</dbReference>
<dbReference type="PANTHER" id="PTHR11142:SF0">
    <property type="entry name" value="TRNA PSEUDOURIDINE SYNTHASE-LIKE 1"/>
    <property type="match status" value="1"/>
</dbReference>
<dbReference type="Pfam" id="PF01416">
    <property type="entry name" value="PseudoU_synth_1"/>
    <property type="match status" value="2"/>
</dbReference>
<dbReference type="PIRSF" id="PIRSF001430">
    <property type="entry name" value="tRNA_psdUrid_synth"/>
    <property type="match status" value="1"/>
</dbReference>
<dbReference type="SUPFAM" id="SSF55120">
    <property type="entry name" value="Pseudouridine synthase"/>
    <property type="match status" value="1"/>
</dbReference>
<keyword id="KW-0413">Isomerase</keyword>
<keyword id="KW-1185">Reference proteome</keyword>
<keyword id="KW-0819">tRNA processing</keyword>
<reference key="1">
    <citation type="journal article" date="2005" name="Genome Res.">
        <title>Genome sequence of Blochmannia pennsylvanicus indicates parallel evolutionary trends among bacterial mutualists of insects.</title>
        <authorList>
            <person name="Degnan P.H."/>
            <person name="Lazarus A.B."/>
            <person name="Wernegreen J.J."/>
        </authorList>
    </citation>
    <scope>NUCLEOTIDE SEQUENCE [LARGE SCALE GENOMIC DNA]</scope>
    <source>
        <strain>BPEN</strain>
    </source>
</reference>
<name>TRUA_BLOPB</name>